<protein>
    <recommendedName>
        <fullName evidence="1">Error-prone DNA polymerase</fullName>
        <ecNumber evidence="1">2.7.7.7</ecNumber>
    </recommendedName>
</protein>
<accession>Q5LVN0</accession>
<sequence length="1101" mass="122743">MTYAELCVTTNFTFLTGASHPEEMITRAAELGLHAIAITDRNSLAGVVRAYAALKELRREADEAIRIRSQHRIDSCSRQEVGHPQPIARPEAPRLPRLITGCRLVLRDSPLHWIALPRDRAAYQRLTRLLTLGKRRAEKGDCHLDLADLLAGCTGMILIALPQGRLDGALPHLQQVQRRFPGHVFLGAAPRYDGSDQAWLAACARLALRSSAPMVAVGDALMHRANRRQLADVLTCMREHITIDRIGTRALPNAERRLKGHADMARLFRDHPAALRRTLDIAARCSFCLSELSYEYPDEVAEGETPQARLERLTAEGIVRRYPGGAPQRVHELVAKELKLVAELGFPAYFLTVHDIVQFARSQGILCQGRGSAANSILCYLLGITDVSPDQIAMVFERFISKYRGEPPDIDVDFEHERREEVIQWIYQRYGRHRAGLCATVIHFRSRAAIREVGKVMGLSQDVTASLSGQIWGQSNGGADPERMRELGLDPEDRRLALTIRLIGEIIGFPRHLSQHVGGFVITRGRLDELAPIENAAMEDRTLIEWDKDDIDTLGILKVDVLGLGMLTCIRKAFDLMREHEQRHLSIDTVPQEDAATYDMLCAADAVGVFQVESRAQMNFLPRMRPRTFYDLVIEVAIVRPGPIQGGMVQPYIRRRQGLEKAEPFGPELAAVTARTLGVPLFQEQALQIAVVGAGYTAEEADHLRRSLASFRRMGTIGAHRDTFIAGMRRNGYSQEVAERCFGQIEGFADYGFPESHAAAFAMLAYVSAWLKCHHPAIFACALLNAQPMGFYAPAQIVRDARDHQVELRPICVNASDWDNRLERRADGALALRLGFRQIKGFREEDAAWIVAARGNGYPDPQALWLRAGVTPAVLERLAEADAFADMGIGRRDALWQVRAIRGQAPLPLFNDPLDGEIIHEPQVTLPAMHLGEEVVEDYVSMRLTLRAHPMELLRPAIPGLTPHDKLASVAAHRVSVCGLVITRQRPGTASGVIFLTLEDETGVSNVVVWPKIYEQFRRIVMGGRLLRVTGTLQREGIVVHLIAQRIEDLSPRLADLGHPMDSAVGQTTPQTDSAPRPRPQPRAMHPREQAKRLFPSRDFH</sequence>
<comment type="function">
    <text evidence="1">DNA polymerase involved in damage-induced mutagenesis and translesion synthesis (TLS). It is not the major replicative DNA polymerase.</text>
</comment>
<comment type="catalytic activity">
    <reaction evidence="1">
        <text>DNA(n) + a 2'-deoxyribonucleoside 5'-triphosphate = DNA(n+1) + diphosphate</text>
        <dbReference type="Rhea" id="RHEA:22508"/>
        <dbReference type="Rhea" id="RHEA-COMP:17339"/>
        <dbReference type="Rhea" id="RHEA-COMP:17340"/>
        <dbReference type="ChEBI" id="CHEBI:33019"/>
        <dbReference type="ChEBI" id="CHEBI:61560"/>
        <dbReference type="ChEBI" id="CHEBI:173112"/>
        <dbReference type="EC" id="2.7.7.7"/>
    </reaction>
</comment>
<comment type="subcellular location">
    <subcellularLocation>
        <location evidence="1">Cytoplasm</location>
    </subcellularLocation>
</comment>
<comment type="similarity">
    <text evidence="1">Belongs to the DNA polymerase type-C family. DnaE2 subfamily.</text>
</comment>
<feature type="chain" id="PRO_0000103399" description="Error-prone DNA polymerase">
    <location>
        <begin position="1"/>
        <end position="1101"/>
    </location>
</feature>
<feature type="region of interest" description="Disordered" evidence="2">
    <location>
        <begin position="1055"/>
        <end position="1101"/>
    </location>
</feature>
<feature type="compositionally biased region" description="Polar residues" evidence="2">
    <location>
        <begin position="1065"/>
        <end position="1074"/>
    </location>
</feature>
<feature type="compositionally biased region" description="Basic and acidic residues" evidence="2">
    <location>
        <begin position="1086"/>
        <end position="1101"/>
    </location>
</feature>
<dbReference type="EC" id="2.7.7.7" evidence="1"/>
<dbReference type="EMBL" id="CP000031">
    <property type="protein sequence ID" value="AAV93978.1"/>
    <property type="molecule type" value="Genomic_DNA"/>
</dbReference>
<dbReference type="RefSeq" id="WP_011046421.1">
    <property type="nucleotide sequence ID" value="NC_003911.12"/>
</dbReference>
<dbReference type="SMR" id="Q5LVN0"/>
<dbReference type="STRING" id="246200.SPO0670"/>
<dbReference type="PaxDb" id="246200-SPO0670"/>
<dbReference type="KEGG" id="sil:SPO0670"/>
<dbReference type="eggNOG" id="COG0587">
    <property type="taxonomic scope" value="Bacteria"/>
</dbReference>
<dbReference type="HOGENOM" id="CLU_001600_4_0_5"/>
<dbReference type="OrthoDB" id="9803237at2"/>
<dbReference type="Proteomes" id="UP000001023">
    <property type="component" value="Chromosome"/>
</dbReference>
<dbReference type="GO" id="GO:0005737">
    <property type="term" value="C:cytoplasm"/>
    <property type="evidence" value="ECO:0007669"/>
    <property type="project" value="UniProtKB-SubCell"/>
</dbReference>
<dbReference type="GO" id="GO:0008408">
    <property type="term" value="F:3'-5' exonuclease activity"/>
    <property type="evidence" value="ECO:0007669"/>
    <property type="project" value="InterPro"/>
</dbReference>
<dbReference type="GO" id="GO:0003887">
    <property type="term" value="F:DNA-directed DNA polymerase activity"/>
    <property type="evidence" value="ECO:0007669"/>
    <property type="project" value="UniProtKB-UniRule"/>
</dbReference>
<dbReference type="GO" id="GO:0003676">
    <property type="term" value="F:nucleic acid binding"/>
    <property type="evidence" value="ECO:0007669"/>
    <property type="project" value="InterPro"/>
</dbReference>
<dbReference type="GO" id="GO:0006281">
    <property type="term" value="P:DNA repair"/>
    <property type="evidence" value="ECO:0007669"/>
    <property type="project" value="UniProtKB-UniRule"/>
</dbReference>
<dbReference type="GO" id="GO:0006260">
    <property type="term" value="P:DNA replication"/>
    <property type="evidence" value="ECO:0007669"/>
    <property type="project" value="UniProtKB-KW"/>
</dbReference>
<dbReference type="CDD" id="cd04485">
    <property type="entry name" value="DnaE_OBF"/>
    <property type="match status" value="1"/>
</dbReference>
<dbReference type="CDD" id="cd07434">
    <property type="entry name" value="PHP_PolIIIA_DnaE2"/>
    <property type="match status" value="1"/>
</dbReference>
<dbReference type="Gene3D" id="3.20.20.140">
    <property type="entry name" value="Metal-dependent hydrolases"/>
    <property type="match status" value="1"/>
</dbReference>
<dbReference type="HAMAP" id="MF_01902">
    <property type="entry name" value="DNApol_error_prone"/>
    <property type="match status" value="1"/>
</dbReference>
<dbReference type="InterPro" id="IPR011708">
    <property type="entry name" value="DNA_pol3_alpha_NTPase_dom"/>
</dbReference>
<dbReference type="InterPro" id="IPR040982">
    <property type="entry name" value="DNA_pol3_finger"/>
</dbReference>
<dbReference type="InterPro" id="IPR023073">
    <property type="entry name" value="DnaE2"/>
</dbReference>
<dbReference type="InterPro" id="IPR004805">
    <property type="entry name" value="DnaE2/DnaE/PolC"/>
</dbReference>
<dbReference type="InterPro" id="IPR029460">
    <property type="entry name" value="DNAPol_HHH"/>
</dbReference>
<dbReference type="InterPro" id="IPR004365">
    <property type="entry name" value="NA-bd_OB_tRNA"/>
</dbReference>
<dbReference type="InterPro" id="IPR004013">
    <property type="entry name" value="PHP_dom"/>
</dbReference>
<dbReference type="InterPro" id="IPR003141">
    <property type="entry name" value="Pol/His_phosphatase_N"/>
</dbReference>
<dbReference type="InterPro" id="IPR016195">
    <property type="entry name" value="Pol/histidinol_Pase-like"/>
</dbReference>
<dbReference type="NCBIfam" id="TIGR00594">
    <property type="entry name" value="polc"/>
    <property type="match status" value="1"/>
</dbReference>
<dbReference type="NCBIfam" id="NF004225">
    <property type="entry name" value="PRK05672.1"/>
    <property type="match status" value="1"/>
</dbReference>
<dbReference type="PANTHER" id="PTHR32294">
    <property type="entry name" value="DNA POLYMERASE III SUBUNIT ALPHA"/>
    <property type="match status" value="1"/>
</dbReference>
<dbReference type="PANTHER" id="PTHR32294:SF4">
    <property type="entry name" value="ERROR-PRONE DNA POLYMERASE"/>
    <property type="match status" value="1"/>
</dbReference>
<dbReference type="Pfam" id="PF07733">
    <property type="entry name" value="DNA_pol3_alpha"/>
    <property type="match status" value="1"/>
</dbReference>
<dbReference type="Pfam" id="PF17657">
    <property type="entry name" value="DNA_pol3_finger"/>
    <property type="match status" value="1"/>
</dbReference>
<dbReference type="Pfam" id="PF14579">
    <property type="entry name" value="HHH_6"/>
    <property type="match status" value="1"/>
</dbReference>
<dbReference type="Pfam" id="PF02811">
    <property type="entry name" value="PHP"/>
    <property type="match status" value="1"/>
</dbReference>
<dbReference type="Pfam" id="PF01336">
    <property type="entry name" value="tRNA_anti-codon"/>
    <property type="match status" value="1"/>
</dbReference>
<dbReference type="SMART" id="SM00481">
    <property type="entry name" value="POLIIIAc"/>
    <property type="match status" value="1"/>
</dbReference>
<dbReference type="SUPFAM" id="SSF89550">
    <property type="entry name" value="PHP domain-like"/>
    <property type="match status" value="1"/>
</dbReference>
<gene>
    <name evidence="1" type="primary">dnaE2</name>
    <name type="ordered locus">SPO0670</name>
</gene>
<reference key="1">
    <citation type="journal article" date="2004" name="Nature">
        <title>Genome sequence of Silicibacter pomeroyi reveals adaptations to the marine environment.</title>
        <authorList>
            <person name="Moran M.A."/>
            <person name="Buchan A."/>
            <person name="Gonzalez J.M."/>
            <person name="Heidelberg J.F."/>
            <person name="Whitman W.B."/>
            <person name="Kiene R.P."/>
            <person name="Henriksen J.R."/>
            <person name="King G.M."/>
            <person name="Belas R."/>
            <person name="Fuqua C."/>
            <person name="Brinkac L.M."/>
            <person name="Lewis M."/>
            <person name="Johri S."/>
            <person name="Weaver B."/>
            <person name="Pai G."/>
            <person name="Eisen J.A."/>
            <person name="Rahe E."/>
            <person name="Sheldon W.M."/>
            <person name="Ye W."/>
            <person name="Miller T.R."/>
            <person name="Carlton J."/>
            <person name="Rasko D.A."/>
            <person name="Paulsen I.T."/>
            <person name="Ren Q."/>
            <person name="Daugherty S.C."/>
            <person name="DeBoy R.T."/>
            <person name="Dodson R.J."/>
            <person name="Durkin A.S."/>
            <person name="Madupu R."/>
            <person name="Nelson W.C."/>
            <person name="Sullivan S.A."/>
            <person name="Rosovitz M.J."/>
            <person name="Haft D.H."/>
            <person name="Selengut J."/>
            <person name="Ward N."/>
        </authorList>
    </citation>
    <scope>NUCLEOTIDE SEQUENCE [LARGE SCALE GENOMIC DNA]</scope>
    <source>
        <strain>ATCC 700808 / DSM 15171 / DSS-3</strain>
    </source>
</reference>
<reference key="2">
    <citation type="journal article" date="2014" name="Stand. Genomic Sci.">
        <title>An updated genome annotation for the model marine bacterium Ruegeria pomeroyi DSS-3.</title>
        <authorList>
            <person name="Rivers A.R."/>
            <person name="Smith C.B."/>
            <person name="Moran M.A."/>
        </authorList>
    </citation>
    <scope>GENOME REANNOTATION</scope>
    <source>
        <strain>ATCC 700808 / DSM 15171 / DSS-3</strain>
    </source>
</reference>
<name>DNAE2_RUEPO</name>
<proteinExistence type="inferred from homology"/>
<keyword id="KW-0963">Cytoplasm</keyword>
<keyword id="KW-0227">DNA damage</keyword>
<keyword id="KW-0234">DNA repair</keyword>
<keyword id="KW-0235">DNA replication</keyword>
<keyword id="KW-0239">DNA-directed DNA polymerase</keyword>
<keyword id="KW-0548">Nucleotidyltransferase</keyword>
<keyword id="KW-1185">Reference proteome</keyword>
<keyword id="KW-0808">Transferase</keyword>
<organism>
    <name type="scientific">Ruegeria pomeroyi (strain ATCC 700808 / DSM 15171 / DSS-3)</name>
    <name type="common">Silicibacter pomeroyi</name>
    <dbReference type="NCBI Taxonomy" id="246200"/>
    <lineage>
        <taxon>Bacteria</taxon>
        <taxon>Pseudomonadati</taxon>
        <taxon>Pseudomonadota</taxon>
        <taxon>Alphaproteobacteria</taxon>
        <taxon>Rhodobacterales</taxon>
        <taxon>Roseobacteraceae</taxon>
        <taxon>Ruegeria</taxon>
    </lineage>
</organism>
<evidence type="ECO:0000255" key="1">
    <source>
        <dbReference type="HAMAP-Rule" id="MF_01902"/>
    </source>
</evidence>
<evidence type="ECO:0000256" key="2">
    <source>
        <dbReference type="SAM" id="MobiDB-lite"/>
    </source>
</evidence>